<accession>B1JPW4</accession>
<evidence type="ECO:0000255" key="1">
    <source>
        <dbReference type="HAMAP-Rule" id="MF_01014"/>
    </source>
</evidence>
<keyword id="KW-0028">Amino-acid biosynthesis</keyword>
<keyword id="KW-0963">Cytoplasm</keyword>
<keyword id="KW-0368">Histidine biosynthesis</keyword>
<keyword id="KW-0413">Isomerase</keyword>
<protein>
    <recommendedName>
        <fullName evidence="1">1-(5-phosphoribosyl)-5-[(5-phosphoribosylamino)methylideneamino] imidazole-4-carboxamide isomerase</fullName>
        <ecNumber evidence="1">5.3.1.16</ecNumber>
    </recommendedName>
    <alternativeName>
        <fullName evidence="1">Phosphoribosylformimino-5-aminoimidazole carboxamide ribotide isomerase</fullName>
    </alternativeName>
</protein>
<name>HIS4_YERPY</name>
<dbReference type="EC" id="5.3.1.16" evidence="1"/>
<dbReference type="EMBL" id="CP000950">
    <property type="protein sequence ID" value="ACA68807.1"/>
    <property type="molecule type" value="Genomic_DNA"/>
</dbReference>
<dbReference type="RefSeq" id="WP_002211891.1">
    <property type="nucleotide sequence ID" value="NZ_CP009792.1"/>
</dbReference>
<dbReference type="SMR" id="B1JPW4"/>
<dbReference type="GeneID" id="96665163"/>
<dbReference type="KEGG" id="ypy:YPK_2530"/>
<dbReference type="PATRIC" id="fig|502800.11.peg.3227"/>
<dbReference type="UniPathway" id="UPA00031">
    <property type="reaction ID" value="UER00009"/>
</dbReference>
<dbReference type="GO" id="GO:0005737">
    <property type="term" value="C:cytoplasm"/>
    <property type="evidence" value="ECO:0007669"/>
    <property type="project" value="UniProtKB-SubCell"/>
</dbReference>
<dbReference type="GO" id="GO:0003949">
    <property type="term" value="F:1-(5-phosphoribosyl)-5-[(5-phosphoribosylamino)methylideneamino]imidazole-4-carboxamide isomerase activity"/>
    <property type="evidence" value="ECO:0007669"/>
    <property type="project" value="UniProtKB-UniRule"/>
</dbReference>
<dbReference type="GO" id="GO:0000105">
    <property type="term" value="P:L-histidine biosynthetic process"/>
    <property type="evidence" value="ECO:0007669"/>
    <property type="project" value="UniProtKB-UniRule"/>
</dbReference>
<dbReference type="GO" id="GO:0000162">
    <property type="term" value="P:L-tryptophan biosynthetic process"/>
    <property type="evidence" value="ECO:0007669"/>
    <property type="project" value="TreeGrafter"/>
</dbReference>
<dbReference type="CDD" id="cd04732">
    <property type="entry name" value="HisA"/>
    <property type="match status" value="1"/>
</dbReference>
<dbReference type="FunFam" id="3.20.20.70:FF:000009">
    <property type="entry name" value="1-(5-phosphoribosyl)-5-[(5-phosphoribosylamino)methylideneamino] imidazole-4-carboxamide isomerase"/>
    <property type="match status" value="1"/>
</dbReference>
<dbReference type="Gene3D" id="3.20.20.70">
    <property type="entry name" value="Aldolase class I"/>
    <property type="match status" value="1"/>
</dbReference>
<dbReference type="HAMAP" id="MF_01014">
    <property type="entry name" value="HisA"/>
    <property type="match status" value="1"/>
</dbReference>
<dbReference type="InterPro" id="IPR013785">
    <property type="entry name" value="Aldolase_TIM"/>
</dbReference>
<dbReference type="InterPro" id="IPR006062">
    <property type="entry name" value="His_biosynth"/>
</dbReference>
<dbReference type="InterPro" id="IPR006063">
    <property type="entry name" value="HisA_bact_arch"/>
</dbReference>
<dbReference type="InterPro" id="IPR044524">
    <property type="entry name" value="Isoase_HisA-like"/>
</dbReference>
<dbReference type="InterPro" id="IPR023016">
    <property type="entry name" value="Isoase_HisA-like_bact"/>
</dbReference>
<dbReference type="InterPro" id="IPR011060">
    <property type="entry name" value="RibuloseP-bd_barrel"/>
</dbReference>
<dbReference type="NCBIfam" id="TIGR00007">
    <property type="entry name" value="1-(5-phosphoribosyl)-5-[(5-phosphoribosylamino)methylideneamino]imidazole-4-carboxamide isomerase"/>
    <property type="match status" value="1"/>
</dbReference>
<dbReference type="PANTHER" id="PTHR43090">
    <property type="entry name" value="1-(5-PHOSPHORIBOSYL)-5-[(5-PHOSPHORIBOSYLAMINO)METHYLIDENEAMINO] IMIDAZOLE-4-CARBOXAMIDE ISOMERASE"/>
    <property type="match status" value="1"/>
</dbReference>
<dbReference type="PANTHER" id="PTHR43090:SF2">
    <property type="entry name" value="1-(5-PHOSPHORIBOSYL)-5-[(5-PHOSPHORIBOSYLAMINO)METHYLIDENEAMINO] IMIDAZOLE-4-CARBOXAMIDE ISOMERASE"/>
    <property type="match status" value="1"/>
</dbReference>
<dbReference type="Pfam" id="PF00977">
    <property type="entry name" value="His_biosynth"/>
    <property type="match status" value="1"/>
</dbReference>
<dbReference type="SUPFAM" id="SSF51366">
    <property type="entry name" value="Ribulose-phoshate binding barrel"/>
    <property type="match status" value="1"/>
</dbReference>
<gene>
    <name evidence="1" type="primary">hisA</name>
    <name type="ordered locus">YPK_2530</name>
</gene>
<sequence length="245" mass="26647">MIIPALDLIEGKVVRLHQGDYGQQRDYGNHPLPRLQDYQQQGAQVLHLVDLTGAKDPAARQIPLLRELLAGVDVPVQVGGGIRNEQDVVALLEAGAARVVVGSTAVKQPEMVQQWFERYGAEAIVLALDVRINEAGCKHVAISGWQENSDATLEQIVEQYLPYGLKHVLCTDISRDGTLSGSNVELYQEVCQRYPQVAFQASGGIGCLDDIARLRGSGVQGVIVGRALLDGKFNVKEAIACWQNV</sequence>
<feature type="chain" id="PRO_1000135176" description="1-(5-phosphoribosyl)-5-[(5-phosphoribosylamino)methylideneamino] imidazole-4-carboxamide isomerase">
    <location>
        <begin position="1"/>
        <end position="245"/>
    </location>
</feature>
<feature type="active site" description="Proton acceptor" evidence="1">
    <location>
        <position position="7"/>
    </location>
</feature>
<feature type="active site" description="Proton donor" evidence="1">
    <location>
        <position position="129"/>
    </location>
</feature>
<reference key="1">
    <citation type="submission" date="2008-02" db="EMBL/GenBank/DDBJ databases">
        <title>Complete sequence of Yersinia pseudotuberculosis YPIII.</title>
        <authorList>
            <consortium name="US DOE Joint Genome Institute"/>
            <person name="Copeland A."/>
            <person name="Lucas S."/>
            <person name="Lapidus A."/>
            <person name="Glavina del Rio T."/>
            <person name="Dalin E."/>
            <person name="Tice H."/>
            <person name="Bruce D."/>
            <person name="Goodwin L."/>
            <person name="Pitluck S."/>
            <person name="Munk A.C."/>
            <person name="Brettin T."/>
            <person name="Detter J.C."/>
            <person name="Han C."/>
            <person name="Tapia R."/>
            <person name="Schmutz J."/>
            <person name="Larimer F."/>
            <person name="Land M."/>
            <person name="Hauser L."/>
            <person name="Challacombe J.F."/>
            <person name="Green L."/>
            <person name="Lindler L.E."/>
            <person name="Nikolich M.P."/>
            <person name="Richardson P."/>
        </authorList>
    </citation>
    <scope>NUCLEOTIDE SEQUENCE [LARGE SCALE GENOMIC DNA]</scope>
    <source>
        <strain>YPIII</strain>
    </source>
</reference>
<organism>
    <name type="scientific">Yersinia pseudotuberculosis serotype O:3 (strain YPIII)</name>
    <dbReference type="NCBI Taxonomy" id="502800"/>
    <lineage>
        <taxon>Bacteria</taxon>
        <taxon>Pseudomonadati</taxon>
        <taxon>Pseudomonadota</taxon>
        <taxon>Gammaproteobacteria</taxon>
        <taxon>Enterobacterales</taxon>
        <taxon>Yersiniaceae</taxon>
        <taxon>Yersinia</taxon>
    </lineage>
</organism>
<proteinExistence type="inferred from homology"/>
<comment type="catalytic activity">
    <reaction evidence="1">
        <text>1-(5-phospho-beta-D-ribosyl)-5-[(5-phospho-beta-D-ribosylamino)methylideneamino]imidazole-4-carboxamide = 5-[(5-phospho-1-deoxy-D-ribulos-1-ylimino)methylamino]-1-(5-phospho-beta-D-ribosyl)imidazole-4-carboxamide</text>
        <dbReference type="Rhea" id="RHEA:15469"/>
        <dbReference type="ChEBI" id="CHEBI:58435"/>
        <dbReference type="ChEBI" id="CHEBI:58525"/>
        <dbReference type="EC" id="5.3.1.16"/>
    </reaction>
</comment>
<comment type="pathway">
    <text evidence="1">Amino-acid biosynthesis; L-histidine biosynthesis; L-histidine from 5-phospho-alpha-D-ribose 1-diphosphate: step 4/9.</text>
</comment>
<comment type="subcellular location">
    <subcellularLocation>
        <location evidence="1">Cytoplasm</location>
    </subcellularLocation>
</comment>
<comment type="similarity">
    <text evidence="1">Belongs to the HisA/HisF family.</text>
</comment>